<protein>
    <recommendedName>
        <fullName>RNA replication protein</fullName>
    </recommendedName>
    <domain>
        <recommendedName>
            <fullName>RNA-directed RNA polymerase</fullName>
            <ecNumber>2.7.7.48</ecNumber>
        </recommendedName>
    </domain>
    <domain>
        <recommendedName>
            <fullName>Helicase</fullName>
            <ecNumber>3.6.4.13</ecNumber>
        </recommendedName>
    </domain>
</protein>
<keyword id="KW-0067">ATP-binding</keyword>
<keyword id="KW-0347">Helicase</keyword>
<keyword id="KW-0378">Hydrolase</keyword>
<keyword id="KW-0511">Multifunctional enzyme</keyword>
<keyword id="KW-0547">Nucleotide-binding</keyword>
<keyword id="KW-0548">Nucleotidyltransferase</keyword>
<keyword id="KW-1185">Reference proteome</keyword>
<keyword id="KW-0696">RNA-directed RNA polymerase</keyword>
<keyword id="KW-0808">Transferase</keyword>
<keyword id="KW-0693">Viral RNA replication</keyword>
<proteinExistence type="inferred from homology"/>
<comment type="function">
    <text evidence="3">RNA replication. The protein possibly functions as an ATP-binding helicase (Probable).</text>
</comment>
<comment type="catalytic activity">
    <reaction>
        <text>RNA(n) + a ribonucleoside 5'-triphosphate = RNA(n+1) + diphosphate</text>
        <dbReference type="Rhea" id="RHEA:21248"/>
        <dbReference type="Rhea" id="RHEA-COMP:14527"/>
        <dbReference type="Rhea" id="RHEA-COMP:17342"/>
        <dbReference type="ChEBI" id="CHEBI:33019"/>
        <dbReference type="ChEBI" id="CHEBI:61557"/>
        <dbReference type="ChEBI" id="CHEBI:140395"/>
        <dbReference type="EC" id="2.7.7.48"/>
    </reaction>
</comment>
<comment type="catalytic activity">
    <reaction>
        <text>ATP + H2O = ADP + phosphate + H(+)</text>
        <dbReference type="Rhea" id="RHEA:13065"/>
        <dbReference type="ChEBI" id="CHEBI:15377"/>
        <dbReference type="ChEBI" id="CHEBI:15378"/>
        <dbReference type="ChEBI" id="CHEBI:30616"/>
        <dbReference type="ChEBI" id="CHEBI:43474"/>
        <dbReference type="ChEBI" id="CHEBI:456216"/>
        <dbReference type="EC" id="3.6.4.13"/>
    </reaction>
</comment>
<comment type="miscellaneous">
    <text>The sclerotinia sclerotiorum debilitation-associated virus contains only a single ORF.</text>
</comment>
<comment type="similarity">
    <text evidence="3">Belongs to the potexvirus/carlavirus RNA replication protein family.</text>
</comment>
<sequence>MKLRNPKAPIRNDRKAQRSFHKMLSLKAQAKLALTIQDRLELGLLSNNFIRKKLQFVDGYCYLKFLRCAERKTAARNLGSDPSLGLMKRKLVPSQYHSWQSNYTLLVTKSSKLTFAHVNRALGGQKLAEVPANCCIGSTICPFLSVPGDHSSYLVNQLPYMNGYCYLKLIRRTCRFNAVVTLGPWPLATDFFDYIIHRNLNKDLGLFKCNLENTINGSFCHIVEADPGSQNCIFPLPQDCRIGGSISEVVKTLGPDKEMIERDAVTEIKKEIAIVRKYNPYHHSSKQQSALESYGIGSDPYAVRSHTHAAEKAIENKLLDIVGMNLRRRSVITMLWQKRNKAHLMGRSNCKDVYVNTIMEAKDLVRYDQFSFGLPSVATSTAFIGDALHHMTPESVFDLFERSPNLMVLHATIVIPPETLLKCRSSNPELYSLRYYDDKFVYIPEGHAGGSYVHEVKNSNWLAISHIQRGGKFLTVKRLETLAAHHYFVIVKGKVETDSIRVFQSPSQVELLDIFADRQSNVRCSLDHAFAIKMERYVHSLKRLELADVTAKTRQLLSSEELLQYSPTDLVKIDNYFYFLAHTSRFNSSEELIGSGFFESLVSPLKQWFSEICEKFLGKSNFHKTLEALEWKVINYDVKTVIYDMSKPWEKLHWKSENNLLSFDLDSNDNPTSLVDNTDCEASYSESTKFDYELVQVEDDFIDIRIPGIDIPIYDSEYLASEEPVEVEESPIPEVLPEIEDNLSDSMSIDGWMSQSLKTFLPEHDDKVLSILEKFGVSKYGQVVGKNLILPITDFKSVQFEKIGQDEFTESLQDRGFGFVSYTPDAERVAVAATDLEHGQGVLITSDEAGELFKKAMPMSVYTCVILGAGGAGKTTFVEKFVKDNPKSFTVVTPLSVLKKEWQRKGAKNVFTYETALKRSLKKPANEYVILDDFTRFPAGWIELYMSLNTKSKYIVIGDSRQADSHSMSGAFANALVPAIDLFAPLSPFYLNWTWRMTRPVANALGHVSWKLPESGKPILSVSSEVPKDCVVLAPSTTLKVGVETVNDKAFTYTSAQGATFDKVAILIDDNITRVCGDKAVYTALSRSKGEIVFVSTVTGPDTFEKVKCTPFLRTFVELVREYELNQPKVREPEEDFVDDVTPVTSQPKVSEEFLIEELNKNSVEKFDREIFRADLGHTDAVKEIGRVTEQIPRQQRSDEALNLVTLDKRVHHATVEENLDELARKKALGNILWTNFKEQYYSGLESVMVDQDLLVSCRAEITKTYLSKTEALLKGGQLRQSPDFDKFKIADFLKTQWVRKTEKYGLPIKAGQTVTSFMQETVMATGTLSRYMRRMFDKLCTNPNVYLHREKTEQDFSTWVKNGWNFSGHATINDCEAFDASQDGAFVEFERLHAEFLGVPRELIDFYVDTKIKSYIWRGTISVMRLSGEGPTYDFNTWANMAFMATKYSIPSVAMTAYSGDDFACDQVLSVKPAFKELECRFKLKEKRFLKSQGRGSYADFCGMIITPNGVIKNPRKLYLSLKSHDEIGTIDKAIVNYYNDLRTLISLGDNIFSALDATETEFFAGCLNVVHDYILRGSNYEGHQNLTLFKKPRTIKWRVERDETRDCLIHMIIQDRKFIRNLLEGVEQTCDNKPNSNLIFRGMTNGYQKRAKFNQLLNRQDEYLDKVLHKSAGQNALRRLTATLDDTQDSTVAEQSAV</sequence>
<reference key="1">
    <citation type="journal article" date="2006" name="J. Gen. Virol.">
        <title>Characterization of debilitation-associated mycovirus infecting the plant-pathogenic fungus Sclerotinia sclerotiorum.</title>
        <authorList>
            <person name="Xie J."/>
            <person name="Wei D."/>
            <person name="Jiang D."/>
            <person name="Fu Y."/>
            <person name="Li G."/>
            <person name="Ghabrial S."/>
            <person name="Peng Y."/>
        </authorList>
    </citation>
    <scope>NUCLEOTIDE SEQUENCE [GENOMIC RNA]</scope>
</reference>
<evidence type="ECO:0000255" key="1"/>
<evidence type="ECO:0000255" key="2">
    <source>
        <dbReference type="PROSITE-ProRule" id="PRU01079"/>
    </source>
</evidence>
<evidence type="ECO:0000305" key="3"/>
<organismHost>
    <name type="scientific">Sclerotinia sclerotiorum</name>
    <name type="common">White mold</name>
    <name type="synonym">Whetzelinia sclerotiorum</name>
    <dbReference type="NCBI Taxonomy" id="5180"/>
</organismHost>
<dbReference type="EC" id="2.7.7.48"/>
<dbReference type="EC" id="3.6.4.13"/>
<dbReference type="EMBL" id="AY147260">
    <property type="protein sequence ID" value="AAN64332.2"/>
    <property type="molecule type" value="Genomic_RNA"/>
</dbReference>
<dbReference type="RefSeq" id="YP_325662.1">
    <property type="nucleotide sequence ID" value="NC_007415.1"/>
</dbReference>
<dbReference type="GeneID" id="5075997"/>
<dbReference type="KEGG" id="vg:5075997"/>
<dbReference type="Proteomes" id="UP000000395">
    <property type="component" value="Segment"/>
</dbReference>
<dbReference type="GO" id="GO:0005524">
    <property type="term" value="F:ATP binding"/>
    <property type="evidence" value="ECO:0007669"/>
    <property type="project" value="UniProtKB-KW"/>
</dbReference>
<dbReference type="GO" id="GO:0016887">
    <property type="term" value="F:ATP hydrolysis activity"/>
    <property type="evidence" value="ECO:0007669"/>
    <property type="project" value="RHEA"/>
</dbReference>
<dbReference type="GO" id="GO:0008174">
    <property type="term" value="F:mRNA methyltransferase activity"/>
    <property type="evidence" value="ECO:0007669"/>
    <property type="project" value="InterPro"/>
</dbReference>
<dbReference type="GO" id="GO:0003723">
    <property type="term" value="F:RNA binding"/>
    <property type="evidence" value="ECO:0007669"/>
    <property type="project" value="InterPro"/>
</dbReference>
<dbReference type="GO" id="GO:0003724">
    <property type="term" value="F:RNA helicase activity"/>
    <property type="evidence" value="ECO:0007669"/>
    <property type="project" value="UniProtKB-EC"/>
</dbReference>
<dbReference type="GO" id="GO:0003968">
    <property type="term" value="F:RNA-directed RNA polymerase activity"/>
    <property type="evidence" value="ECO:0007669"/>
    <property type="project" value="UniProtKB-KW"/>
</dbReference>
<dbReference type="GO" id="GO:0006351">
    <property type="term" value="P:DNA-templated transcription"/>
    <property type="evidence" value="ECO:0007669"/>
    <property type="project" value="InterPro"/>
</dbReference>
<dbReference type="GO" id="GO:0016556">
    <property type="term" value="P:mRNA modification"/>
    <property type="evidence" value="ECO:0007669"/>
    <property type="project" value="InterPro"/>
</dbReference>
<dbReference type="GO" id="GO:0006396">
    <property type="term" value="P:RNA processing"/>
    <property type="evidence" value="ECO:0007669"/>
    <property type="project" value="InterPro"/>
</dbReference>
<dbReference type="Gene3D" id="3.40.50.300">
    <property type="entry name" value="P-loop containing nucleotide triphosphate hydrolases"/>
    <property type="match status" value="2"/>
</dbReference>
<dbReference type="InterPro" id="IPR027351">
    <property type="entry name" value="(+)RNA_virus_helicase_core_dom"/>
</dbReference>
<dbReference type="InterPro" id="IPR002588">
    <property type="entry name" value="Alphavirus-like_MT_dom"/>
</dbReference>
<dbReference type="InterPro" id="IPR043502">
    <property type="entry name" value="DNA/RNA_pol_sf"/>
</dbReference>
<dbReference type="InterPro" id="IPR027417">
    <property type="entry name" value="P-loop_NTPase"/>
</dbReference>
<dbReference type="InterPro" id="IPR001788">
    <property type="entry name" value="RNA-dep_RNA_pol_alsuvir"/>
</dbReference>
<dbReference type="Pfam" id="PF00978">
    <property type="entry name" value="RdRP_2"/>
    <property type="match status" value="1"/>
</dbReference>
<dbReference type="Pfam" id="PF01443">
    <property type="entry name" value="Viral_helicase1"/>
    <property type="match status" value="1"/>
</dbReference>
<dbReference type="Pfam" id="PF01660">
    <property type="entry name" value="Vmethyltransf"/>
    <property type="match status" value="1"/>
</dbReference>
<dbReference type="SUPFAM" id="SSF56672">
    <property type="entry name" value="DNA/RNA polymerases"/>
    <property type="match status" value="1"/>
</dbReference>
<dbReference type="SUPFAM" id="SSF52540">
    <property type="entry name" value="P-loop containing nucleoside triphosphate hydrolases"/>
    <property type="match status" value="2"/>
</dbReference>
<dbReference type="PROSITE" id="PS51743">
    <property type="entry name" value="ALPHAVIRUS_MT"/>
    <property type="match status" value="1"/>
</dbReference>
<dbReference type="PROSITE" id="PS51657">
    <property type="entry name" value="PSRV_HELICASE"/>
    <property type="match status" value="1"/>
</dbReference>
<feature type="chain" id="PRO_0000401072" description="RNA replication protein">
    <location>
        <begin position="1"/>
        <end position="1700"/>
    </location>
</feature>
<feature type="domain" description="Alphavirus-like MT" evidence="2">
    <location>
        <begin position="299"/>
        <end position="462"/>
    </location>
</feature>
<feature type="domain" description="(+)RNA virus helicase ATP-binding">
    <location>
        <begin position="842"/>
        <end position="991"/>
    </location>
</feature>
<feature type="domain" description="(+)RNA virus helicase C-terminal">
    <location>
        <begin position="992"/>
        <end position="1128"/>
    </location>
</feature>
<feature type="domain" description="RdRp catalytic">
    <location>
        <begin position="1369"/>
        <end position="1480"/>
    </location>
</feature>
<feature type="binding site" evidence="1">
    <location>
        <begin position="868"/>
        <end position="875"/>
    </location>
    <ligand>
        <name>ATP</name>
        <dbReference type="ChEBI" id="CHEBI:30616"/>
    </ligand>
</feature>
<name>RDRP_SSDRV</name>
<organism>
    <name type="scientific">Sclerotinia sclerotiorum debilitation-associated virus (isolate Sclerotinia/China/Xie/-)</name>
    <name type="common">SsDRV</name>
    <dbReference type="NCBI Taxonomy" id="686987"/>
    <lineage>
        <taxon>Viruses</taxon>
        <taxon>Riboviria</taxon>
        <taxon>Orthornavirae</taxon>
        <taxon>Kitrinoviricota</taxon>
        <taxon>Alsuviricetes</taxon>
        <taxon>Tymovirales</taxon>
        <taxon>Alphaflexiviridae</taxon>
        <taxon>Sclerodarnavirus</taxon>
        <taxon>Sclerotinia sclerotiorum debilitation-associated RNA virus</taxon>
    </lineage>
</organism>
<accession>Q6YI57</accession>